<dbReference type="EMBL" id="AB073599">
    <property type="protein sequence ID" value="BAD38639.1"/>
    <property type="molecule type" value="mRNA"/>
</dbReference>
<dbReference type="EMBL" id="AK304613">
    <property type="protein sequence ID" value="BAH14225.1"/>
    <property type="molecule type" value="mRNA"/>
</dbReference>
<dbReference type="EMBL" id="AC005911">
    <property type="status" value="NOT_ANNOTATED_CDS"/>
    <property type="molecule type" value="Genomic_DNA"/>
</dbReference>
<dbReference type="EMBL" id="BC005106">
    <property type="status" value="NOT_ANNOTATED_CDS"/>
    <property type="molecule type" value="mRNA"/>
</dbReference>
<dbReference type="CCDS" id="CCDS58199.1">
    <molecule id="Q9BSD3-2"/>
</dbReference>
<dbReference type="CCDS" id="CCDS8518.1">
    <molecule id="Q9BSD3-1"/>
</dbReference>
<dbReference type="RefSeq" id="NP_001239428.1">
    <molecule id="Q9BSD3-1"/>
    <property type="nucleotide sequence ID" value="NM_001252499.3"/>
</dbReference>
<dbReference type="RefSeq" id="NP_001239429.1">
    <molecule id="Q9BSD3-2"/>
    <property type="nucleotide sequence ID" value="NM_001252500.3"/>
</dbReference>
<dbReference type="RefSeq" id="NP_001244026.1">
    <molecule id="Q9BSD3-1"/>
    <property type="nucleotide sequence ID" value="NM_001257097.2"/>
</dbReference>
<dbReference type="RefSeq" id="NP_001244027.1">
    <molecule id="Q9BSD3-1"/>
    <property type="nucleotide sequence ID" value="NM_001257098.2"/>
</dbReference>
<dbReference type="PDB" id="6J8Y">
    <property type="method" value="X-ray"/>
    <property type="resolution" value="2.40 A"/>
    <property type="chains" value="D=45-64"/>
</dbReference>
<dbReference type="PDB" id="8WU8">
    <property type="method" value="X-ray"/>
    <property type="resolution" value="2.81 A"/>
    <property type="chains" value="D=88-99"/>
</dbReference>
<dbReference type="PDBsum" id="6J8Y"/>
<dbReference type="PDBsum" id="8WU8"/>
<dbReference type="SMR" id="Q9BSD3"/>
<dbReference type="BioGRID" id="123729">
    <property type="interactions" value="24"/>
</dbReference>
<dbReference type="CORUM" id="Q9BSD3"/>
<dbReference type="FunCoup" id="Q9BSD3">
    <property type="interactions" value="1722"/>
</dbReference>
<dbReference type="IntAct" id="Q9BSD3">
    <property type="interactions" value="18"/>
</dbReference>
<dbReference type="STRING" id="9606.ENSP00000479598"/>
<dbReference type="iPTMnet" id="Q9BSD3"/>
<dbReference type="PhosphoSitePlus" id="Q9BSD3"/>
<dbReference type="BioMuta" id="RHNO1"/>
<dbReference type="DMDM" id="74739410"/>
<dbReference type="MassIVE" id="Q9BSD3"/>
<dbReference type="PaxDb" id="9606-ENSP00000479598"/>
<dbReference type="PeptideAtlas" id="Q9BSD3"/>
<dbReference type="Antibodypedia" id="48896">
    <property type="antibodies" value="12 antibodies from 6 providers"/>
</dbReference>
<dbReference type="DNASU" id="83695"/>
<dbReference type="Ensembl" id="ENST00000461997.5">
    <molecule id="Q9BSD3-2"/>
    <property type="protein sequence ID" value="ENSP00000438828.1"/>
    <property type="gene ID" value="ENSG00000171792.11"/>
</dbReference>
<dbReference type="Ensembl" id="ENST00000489288.7">
    <molecule id="Q9BSD3-1"/>
    <property type="protein sequence ID" value="ENSP00000438590.1"/>
    <property type="gene ID" value="ENSG00000171792.11"/>
</dbReference>
<dbReference type="Ensembl" id="ENST00000618250.4">
    <molecule id="Q9BSD3-1"/>
    <property type="protein sequence ID" value="ENSP00000479598.1"/>
    <property type="gene ID" value="ENSG00000171792.11"/>
</dbReference>
<dbReference type="GeneID" id="83695"/>
<dbReference type="KEGG" id="hsa:83695"/>
<dbReference type="MANE-Select" id="ENST00000489288.7">
    <property type="protein sequence ID" value="ENSP00000438590.1"/>
    <property type="RefSeq nucleotide sequence ID" value="NM_001252499.3"/>
    <property type="RefSeq protein sequence ID" value="NP_001239428.1"/>
</dbReference>
<dbReference type="UCSC" id="uc001qlh.5">
    <molecule id="Q9BSD3-1"/>
    <property type="organism name" value="human"/>
</dbReference>
<dbReference type="AGR" id="HGNC:28206"/>
<dbReference type="CTD" id="83695"/>
<dbReference type="DisGeNET" id="83695"/>
<dbReference type="GeneCards" id="RHNO1"/>
<dbReference type="HGNC" id="HGNC:28206">
    <property type="gene designation" value="RHNO1"/>
</dbReference>
<dbReference type="HPA" id="ENSG00000171792">
    <property type="expression patterns" value="Low tissue specificity"/>
</dbReference>
<dbReference type="MIM" id="614085">
    <property type="type" value="gene"/>
</dbReference>
<dbReference type="neXtProt" id="NX_Q9BSD3"/>
<dbReference type="OpenTargets" id="ENSG00000171792"/>
<dbReference type="VEuPathDB" id="HostDB:ENSG00000171792"/>
<dbReference type="eggNOG" id="ENOG502S7M3">
    <property type="taxonomic scope" value="Eukaryota"/>
</dbReference>
<dbReference type="GeneTree" id="ENSGT00390000003219"/>
<dbReference type="HOGENOM" id="CLU_075584_0_0_1"/>
<dbReference type="InParanoid" id="Q9BSD3"/>
<dbReference type="OMA" id="PKHHYGS"/>
<dbReference type="OrthoDB" id="9942438at2759"/>
<dbReference type="PAN-GO" id="Q9BSD3">
    <property type="GO annotations" value="4 GO annotations based on evolutionary models"/>
</dbReference>
<dbReference type="PhylomeDB" id="Q9BSD3"/>
<dbReference type="TreeFam" id="TF336053"/>
<dbReference type="PathwayCommons" id="Q9BSD3"/>
<dbReference type="Reactome" id="R-HSA-5685938">
    <property type="pathway name" value="HDR through Single Strand Annealing (SSA)"/>
</dbReference>
<dbReference type="Reactome" id="R-HSA-5693607">
    <property type="pathway name" value="Processing of DNA double-strand break ends"/>
</dbReference>
<dbReference type="Reactome" id="R-HSA-5693616">
    <property type="pathway name" value="Presynaptic phase of homologous DNA pairing and strand exchange"/>
</dbReference>
<dbReference type="Reactome" id="R-HSA-6804756">
    <property type="pathway name" value="Regulation of TP53 Activity through Phosphorylation"/>
</dbReference>
<dbReference type="Reactome" id="R-HSA-69473">
    <property type="pathway name" value="G2/M DNA damage checkpoint"/>
</dbReference>
<dbReference type="Reactome" id="R-HSA-9709570">
    <property type="pathway name" value="Impaired BRCA2 binding to RAD51"/>
</dbReference>
<dbReference type="SignaLink" id="Q9BSD3"/>
<dbReference type="BioGRID-ORCS" id="83695">
    <property type="hits" value="26 hits in 1145 CRISPR screens"/>
</dbReference>
<dbReference type="ChiTaRS" id="RHNO1">
    <property type="organism name" value="human"/>
</dbReference>
<dbReference type="GenomeRNAi" id="83695"/>
<dbReference type="Pharos" id="Q9BSD3">
    <property type="development level" value="Tbio"/>
</dbReference>
<dbReference type="PRO" id="PR:Q9BSD3"/>
<dbReference type="Proteomes" id="UP000005640">
    <property type="component" value="Chromosome 12"/>
</dbReference>
<dbReference type="RNAct" id="Q9BSD3">
    <property type="molecule type" value="protein"/>
</dbReference>
<dbReference type="Bgee" id="ENSG00000171792">
    <property type="expression patterns" value="Expressed in ventricular zone and 168 other cell types or tissues"/>
</dbReference>
<dbReference type="ExpressionAtlas" id="Q9BSD3">
    <property type="expression patterns" value="baseline and differential"/>
</dbReference>
<dbReference type="GO" id="GO:0000785">
    <property type="term" value="C:chromatin"/>
    <property type="evidence" value="ECO:0000314"/>
    <property type="project" value="UniProtKB"/>
</dbReference>
<dbReference type="GO" id="GO:0005694">
    <property type="term" value="C:chromosome"/>
    <property type="evidence" value="ECO:0000314"/>
    <property type="project" value="UniProtKB"/>
</dbReference>
<dbReference type="GO" id="GO:0005654">
    <property type="term" value="C:nucleoplasm"/>
    <property type="evidence" value="ECO:0000304"/>
    <property type="project" value="Reactome"/>
</dbReference>
<dbReference type="GO" id="GO:0005634">
    <property type="term" value="C:nucleus"/>
    <property type="evidence" value="ECO:0000314"/>
    <property type="project" value="UniProtKB"/>
</dbReference>
<dbReference type="GO" id="GO:0035861">
    <property type="term" value="C:site of double-strand break"/>
    <property type="evidence" value="ECO:0000314"/>
    <property type="project" value="UniProtKB"/>
</dbReference>
<dbReference type="GO" id="GO:0140463">
    <property type="term" value="F:chromatin-protein adaptor activity"/>
    <property type="evidence" value="ECO:0000314"/>
    <property type="project" value="UniProtKB"/>
</dbReference>
<dbReference type="GO" id="GO:0071479">
    <property type="term" value="P:cellular response to ionizing radiation"/>
    <property type="evidence" value="ECO:0000314"/>
    <property type="project" value="UniProtKB"/>
</dbReference>
<dbReference type="GO" id="GO:0034644">
    <property type="term" value="P:cellular response to UV"/>
    <property type="evidence" value="ECO:0000314"/>
    <property type="project" value="UniProtKB"/>
</dbReference>
<dbReference type="GO" id="GO:0000077">
    <property type="term" value="P:DNA damage checkpoint signaling"/>
    <property type="evidence" value="ECO:0000314"/>
    <property type="project" value="UniProtKB"/>
</dbReference>
<dbReference type="GO" id="GO:0097681">
    <property type="term" value="P:double-strand break repair via alternative nonhomologous end joining"/>
    <property type="evidence" value="ECO:0000314"/>
    <property type="project" value="UniProtKB"/>
</dbReference>
<dbReference type="GO" id="GO:0070318">
    <property type="term" value="P:positive regulation of G0 to G1 transition"/>
    <property type="evidence" value="ECO:0000315"/>
    <property type="project" value="UniProtKB"/>
</dbReference>
<dbReference type="GO" id="GO:1990166">
    <property type="term" value="P:protein localization to site of double-strand break"/>
    <property type="evidence" value="ECO:0000314"/>
    <property type="project" value="UniProtKB"/>
</dbReference>
<dbReference type="GO" id="GO:0000725">
    <property type="term" value="P:recombinational repair"/>
    <property type="evidence" value="ECO:0000315"/>
    <property type="project" value="UniProtKB"/>
</dbReference>
<dbReference type="InterPro" id="IPR029293">
    <property type="entry name" value="RHNO1"/>
</dbReference>
<dbReference type="PANTHER" id="PTHR35541">
    <property type="entry name" value="RAD9, HUS1, RAD1-INTERACTING NUCLEAR ORPHAN PROTEIN 1"/>
    <property type="match status" value="1"/>
</dbReference>
<dbReference type="PANTHER" id="PTHR35541:SF1">
    <property type="entry name" value="RAD9, HUS1, RAD1-INTERACTING NUCLEAR ORPHAN PROTEIN 1"/>
    <property type="match status" value="1"/>
</dbReference>
<dbReference type="Pfam" id="PF15319">
    <property type="entry name" value="RHINO"/>
    <property type="match status" value="1"/>
</dbReference>
<gene>
    <name evidence="12" type="primary">RHNO1</name>
    <name evidence="12" type="synonym">C12orf32</name>
    <name evidence="9" type="synonym">RHINO</name>
    <name evidence="8" type="ORF">HKMT1188</name>
</gene>
<protein>
    <recommendedName>
        <fullName evidence="11">RAD9, HUS1, RAD1-interacting nuclear orphan protein 1</fullName>
    </recommendedName>
    <alternativeName>
        <fullName evidence="9">RAD9, RAD1, HUS1-interacting nuclear orphan protein</fullName>
    </alternativeName>
</protein>
<name>RHNO1_HUMAN</name>
<comment type="function">
    <text evidence="3 4 6">Involved in microhomology-mediated end-joining (MMEJ) DNA repair by promoting recruitment of polymerase theta (POLQ) to DNA damage sites during mitosis (PubMed:37440612). MMEJ is an alternative non-homologous end-joining (NHEJ) machinery that takes place during mitosis to repair double-strand breaks in DNA that originate in S-phase (PubMed:37440612). Accumulates in M-phase; following phosphorylation by PLK1, interacts with POLQ, enabling its recruitment to double-strand breaks for subsequent repair (PubMed:37440612). Also involved in the DNA damage response (DDR) signaling in response to genotoxic stresses such as ionizing radiation (IR) during the S phase (PubMed:21659603, PubMed:25602520). Recruited to sites of DNA damage through interaction with the 9-1-1 cell-cycle checkpoint response complex and TOPBP1 in a ATR-dependent manner (PubMed:21659603, PubMed:25602520). Required for the progression of the G1 to S phase transition (PubMed:21659603). Plays a role in the stimulation of CHEK1 phosphorylation (PubMed:21659603).</text>
</comment>
<comment type="subunit">
    <text evidence="3 4 5 6">Interacts (when phosphorylated by PLK1) with POLQ; promoting POLQ recruitment to DNA damage sites (PubMed:37440612). Interacts with RAD1; interaction is direct and promotes association with the 9-1-1 (RAD9-RAD1-HUS1) complex (PubMed:31776186). Interacts with RAD18 (PubMed:21659603). Interacts with TOPBP1 (PubMed:21659603, PubMed:25602520). Interacts with UBE2N (PubMed:21659603).</text>
</comment>
<comment type="interaction">
    <interactant intactId="EBI-9658624">
        <id>Q9BSD3</id>
    </interactant>
    <interactant intactId="EBI-11282723">
        <id>Q9Y5Z0</id>
        <label>BACE2</label>
    </interactant>
    <organismsDiffer>false</organismsDiffer>
    <experiments>3</experiments>
</comment>
<comment type="interaction">
    <interactant intactId="EBI-9658624">
        <id>Q9BSD3</id>
    </interactant>
    <interactant intactId="EBI-11524452">
        <id>Q8N9N5-2</id>
        <label>BANP</label>
    </interactant>
    <organismsDiffer>false</organismsDiffer>
    <experiments>3</experiments>
</comment>
<comment type="interaction">
    <interactant intactId="EBI-9658624">
        <id>Q9BSD3</id>
    </interactant>
    <interactant intactId="EBI-3867333">
        <id>A8MQ03</id>
        <label>CYSRT1</label>
    </interactant>
    <organismsDiffer>false</organismsDiffer>
    <experiments>3</experiments>
</comment>
<comment type="interaction">
    <interactant intactId="EBI-9658624">
        <id>Q9BSD3</id>
    </interactant>
    <interactant intactId="EBI-618309">
        <id>Q08379</id>
        <label>GOLGA2</label>
    </interactant>
    <organismsDiffer>false</organismsDiffer>
    <experiments>3</experiments>
</comment>
<comment type="interaction">
    <interactant intactId="EBI-9658624">
        <id>Q9BSD3</id>
    </interactant>
    <interactant intactId="EBI-10171774">
        <id>P60410</id>
        <label>KRTAP10-8</label>
    </interactant>
    <organismsDiffer>false</organismsDiffer>
    <experiments>3</experiments>
</comment>
<comment type="interaction">
    <interactant intactId="EBI-9658624">
        <id>Q9BSD3</id>
    </interactant>
    <interactant intactId="EBI-10172052">
        <id>P60411</id>
        <label>KRTAP10-9</label>
    </interactant>
    <organismsDiffer>false</organismsDiffer>
    <experiments>3</experiments>
</comment>
<comment type="interaction">
    <interactant intactId="EBI-9658624">
        <id>Q9BSD3</id>
    </interactant>
    <interactant intactId="EBI-741037">
        <id>Q9BRK4</id>
        <label>LZTS2</label>
    </interactant>
    <organismsDiffer>false</organismsDiffer>
    <experiments>3</experiments>
</comment>
<comment type="interaction">
    <interactant intactId="EBI-9658624">
        <id>Q9BSD3</id>
    </interactant>
    <interactant intactId="EBI-1105213">
        <id>Q9UBB9</id>
        <label>TFIP11</label>
    </interactant>
    <organismsDiffer>false</organismsDiffer>
    <experiments>6</experiments>
</comment>
<comment type="subcellular location">
    <subcellularLocation>
        <location evidence="2">Nucleus</location>
    </subcellularLocation>
    <subcellularLocation>
        <location evidence="2 3 4 6">Chromosome</location>
    </subcellularLocation>
    <text evidence="3 6">Localizes to sites of DNA damage in a H2AX-independent manner.</text>
</comment>
<comment type="alternative products">
    <event type="alternative splicing"/>
    <isoform>
        <id>Q9BSD3-1</id>
        <name>1</name>
        <sequence type="displayed"/>
    </isoform>
    <isoform>
        <id>Q9BSD3-2</id>
        <name>2</name>
        <sequence type="described" ref="VSP_045307"/>
    </isoform>
</comment>
<comment type="tissue specificity">
    <text evidence="2">Weakly expressed in testis, prostate, ovary, thymus and small intestine (PubMed:20811708). Expressed strongly in breast cancer cells (PubMed:20811708).</text>
</comment>
<comment type="developmental stage">
    <text evidence="6">Accumulates in mitosis and is rapidly degraded upon mitotic exit.</text>
</comment>
<comment type="induction">
    <text evidence="2">Up-regulated in breast cancer cells.</text>
</comment>
<comment type="domain">
    <text evidence="5">The RAD1-binding motif mediates interaction with RAD1.</text>
</comment>
<comment type="PTM">
    <text evidence="6">Phosphorylated at Ser-51 by PLK1, promoting interaction with polymerase theta (POLQ).</text>
</comment>
<comment type="PTM">
    <text evidence="6">Ubiquitinated and degraded by the APC/C complex upon mitotic exit.</text>
</comment>
<feature type="chain" id="PRO_0000263105" description="RAD9, HUS1, RAD1-interacting nuclear orphan protein 1">
    <location>
        <begin position="1"/>
        <end position="238"/>
    </location>
</feature>
<feature type="region of interest" description="Disordered" evidence="1">
    <location>
        <begin position="1"/>
        <end position="31"/>
    </location>
</feature>
<feature type="region of interest" description="Disordered" evidence="1">
    <location>
        <begin position="74"/>
        <end position="105"/>
    </location>
</feature>
<feature type="short sequence motif" description="RAD1-binding motif" evidence="5">
    <location>
        <begin position="55"/>
        <end position="61"/>
    </location>
</feature>
<feature type="short sequence motif" description="D-box" evidence="10">
    <location>
        <begin position="125"/>
        <end position="132"/>
    </location>
</feature>
<feature type="short sequence motif" description="KEN box" evidence="10">
    <location>
        <begin position="174"/>
        <end position="178"/>
    </location>
</feature>
<feature type="compositionally biased region" description="Basic residues" evidence="1">
    <location>
        <begin position="1"/>
        <end position="10"/>
    </location>
</feature>
<feature type="compositionally biased region" description="Basic residues" evidence="1">
    <location>
        <begin position="75"/>
        <end position="84"/>
    </location>
</feature>
<feature type="modified residue" description="Phosphoserine; by PLK1" evidence="6">
    <location>
        <position position="51"/>
    </location>
</feature>
<feature type="splice variant" id="VSP_045307" description="In isoform 2." evidence="7">
    <location>
        <begin position="43"/>
        <end position="56"/>
    </location>
</feature>
<feature type="mutagenesis site" description="In RHINO-PLK1S/T(7A) mutant; abolished phosphorylation leading to decreased interaction with POLQ; when associated with A-141, 162-A--A-164 and A-178." evidence="6">
    <original>ST</original>
    <variation>AA</variation>
    <location>
        <begin position="51"/>
        <end position="52"/>
    </location>
</feature>
<feature type="mutagenesis site" description="Abolished phosphorylation by PLK1, leading to decreased interaction with POLQ." evidence="6">
    <original>S</original>
    <variation>A</variation>
    <location>
        <position position="51"/>
    </location>
</feature>
<feature type="mutagenesis site" description="Inhibits binding to the 9-1-1 complex. Does not inhibit interaction with TOPBP1. Inhibits localizion to sites of DNA damage." evidence="3">
    <original>SWVSPDF</original>
    <variation>AAAAAAA</variation>
    <location>
        <begin position="55"/>
        <end position="61"/>
    </location>
</feature>
<feature type="mutagenesis site" description="Abolished degradation following mitosis; when associated with 174-Missing-178." evidence="6">
    <location>
        <begin position="125"/>
        <end position="132"/>
    </location>
</feature>
<feature type="mutagenesis site" description="In RHINO-PLK1S/T(7A) mutant; abolished phosphorylation leading to decreased interaction with POLQ; when associated with 51-A-A-52, 162-A--A-164 and A-178." evidence="6">
    <original>S</original>
    <variation>A</variation>
    <location>
        <position position="141"/>
    </location>
</feature>
<feature type="mutagenesis site" description="In RHINO-PLK1S/T(7A) mutant; abolished phosphorylation leading to decreased interaction with POLQ; when associated with 51-A-A-52, A-141 and A-178." evidence="6">
    <original>SSS</original>
    <variation>AAA</variation>
    <location>
        <begin position="162"/>
        <end position="164"/>
    </location>
</feature>
<feature type="mutagenesis site" description="Abolished degradation following mitosis; when associated with 125-Missing-132." evidence="6">
    <location>
        <begin position="174"/>
        <end position="178"/>
    </location>
</feature>
<feature type="mutagenesis site" description="In RHINO-PLK1S/T(7A) mutant; abolished phosphorylation leading to decreased interaction with POLQ; when associated with 51-A-A-52, 162-A--A-164 and A-141." evidence="6">
    <original>S</original>
    <variation>A</variation>
    <location>
        <position position="178"/>
    </location>
</feature>
<proteinExistence type="evidence at protein level"/>
<keyword id="KW-0002">3D-structure</keyword>
<keyword id="KW-0025">Alternative splicing</keyword>
<keyword id="KW-0131">Cell cycle</keyword>
<keyword id="KW-0158">Chromosome</keyword>
<keyword id="KW-0227">DNA damage</keyword>
<keyword id="KW-0234">DNA repair</keyword>
<keyword id="KW-0539">Nucleus</keyword>
<keyword id="KW-0597">Phosphoprotein</keyword>
<keyword id="KW-1267">Proteomics identification</keyword>
<keyword id="KW-1185">Reference proteome</keyword>
<keyword id="KW-0832">Ubl conjugation</keyword>
<reference key="1">
    <citation type="journal article" date="2004" name="Oncogene">
        <title>Expression profiling and differential screening between hepatoblastomas and the corresponding normal livers: identification of high expression of the PLK1 oncogene as a poor-prognostic indicator of hepatoblastomas.</title>
        <authorList>
            <person name="Yamada S."/>
            <person name="Ohira M."/>
            <person name="Horie H."/>
            <person name="Ando K."/>
            <person name="Takayasu H."/>
            <person name="Suzuki Y."/>
            <person name="Sugano S."/>
            <person name="Hirata T."/>
            <person name="Goto T."/>
            <person name="Matsunaga T."/>
            <person name="Hiyama E."/>
            <person name="Hayashi Y."/>
            <person name="Ando H."/>
            <person name="Suita S."/>
            <person name="Kaneko M."/>
            <person name="Sasaki F."/>
            <person name="Hashizume K."/>
            <person name="Ohnuma N."/>
            <person name="Nakagawara A."/>
        </authorList>
    </citation>
    <scope>NUCLEOTIDE SEQUENCE [LARGE SCALE MRNA] (ISOFORM 1)</scope>
    <source>
        <tissue>Hepatoblastoma</tissue>
    </source>
</reference>
<reference key="2">
    <citation type="journal article" date="2004" name="Nat. Genet.">
        <title>Complete sequencing and characterization of 21,243 full-length human cDNAs.</title>
        <authorList>
            <person name="Ota T."/>
            <person name="Suzuki Y."/>
            <person name="Nishikawa T."/>
            <person name="Otsuki T."/>
            <person name="Sugiyama T."/>
            <person name="Irie R."/>
            <person name="Wakamatsu A."/>
            <person name="Hayashi K."/>
            <person name="Sato H."/>
            <person name="Nagai K."/>
            <person name="Kimura K."/>
            <person name="Makita H."/>
            <person name="Sekine M."/>
            <person name="Obayashi M."/>
            <person name="Nishi T."/>
            <person name="Shibahara T."/>
            <person name="Tanaka T."/>
            <person name="Ishii S."/>
            <person name="Yamamoto J."/>
            <person name="Saito K."/>
            <person name="Kawai Y."/>
            <person name="Isono Y."/>
            <person name="Nakamura Y."/>
            <person name="Nagahari K."/>
            <person name="Murakami K."/>
            <person name="Yasuda T."/>
            <person name="Iwayanagi T."/>
            <person name="Wagatsuma M."/>
            <person name="Shiratori A."/>
            <person name="Sudo H."/>
            <person name="Hosoiri T."/>
            <person name="Kaku Y."/>
            <person name="Kodaira H."/>
            <person name="Kondo H."/>
            <person name="Sugawara M."/>
            <person name="Takahashi M."/>
            <person name="Kanda K."/>
            <person name="Yokoi T."/>
            <person name="Furuya T."/>
            <person name="Kikkawa E."/>
            <person name="Omura Y."/>
            <person name="Abe K."/>
            <person name="Kamihara K."/>
            <person name="Katsuta N."/>
            <person name="Sato K."/>
            <person name="Tanikawa M."/>
            <person name="Yamazaki M."/>
            <person name="Ninomiya K."/>
            <person name="Ishibashi T."/>
            <person name="Yamashita H."/>
            <person name="Murakawa K."/>
            <person name="Fujimori K."/>
            <person name="Tanai H."/>
            <person name="Kimata M."/>
            <person name="Watanabe M."/>
            <person name="Hiraoka S."/>
            <person name="Chiba Y."/>
            <person name="Ishida S."/>
            <person name="Ono Y."/>
            <person name="Takiguchi S."/>
            <person name="Watanabe S."/>
            <person name="Yosida M."/>
            <person name="Hotuta T."/>
            <person name="Kusano J."/>
            <person name="Kanehori K."/>
            <person name="Takahashi-Fujii A."/>
            <person name="Hara H."/>
            <person name="Tanase T.-O."/>
            <person name="Nomura Y."/>
            <person name="Togiya S."/>
            <person name="Komai F."/>
            <person name="Hara R."/>
            <person name="Takeuchi K."/>
            <person name="Arita M."/>
            <person name="Imose N."/>
            <person name="Musashino K."/>
            <person name="Yuuki H."/>
            <person name="Oshima A."/>
            <person name="Sasaki N."/>
            <person name="Aotsuka S."/>
            <person name="Yoshikawa Y."/>
            <person name="Matsunawa H."/>
            <person name="Ichihara T."/>
            <person name="Shiohata N."/>
            <person name="Sano S."/>
            <person name="Moriya S."/>
            <person name="Momiyama H."/>
            <person name="Satoh N."/>
            <person name="Takami S."/>
            <person name="Terashima Y."/>
            <person name="Suzuki O."/>
            <person name="Nakagawa S."/>
            <person name="Senoh A."/>
            <person name="Mizoguchi H."/>
            <person name="Goto Y."/>
            <person name="Shimizu F."/>
            <person name="Wakebe H."/>
            <person name="Hishigaki H."/>
            <person name="Watanabe T."/>
            <person name="Sugiyama A."/>
            <person name="Takemoto M."/>
            <person name="Kawakami B."/>
            <person name="Yamazaki M."/>
            <person name="Watanabe K."/>
            <person name="Kumagai A."/>
            <person name="Itakura S."/>
            <person name="Fukuzumi Y."/>
            <person name="Fujimori Y."/>
            <person name="Komiyama M."/>
            <person name="Tashiro H."/>
            <person name="Tanigami A."/>
            <person name="Fujiwara T."/>
            <person name="Ono T."/>
            <person name="Yamada K."/>
            <person name="Fujii Y."/>
            <person name="Ozaki K."/>
            <person name="Hirao M."/>
            <person name="Ohmori Y."/>
            <person name="Kawabata A."/>
            <person name="Hikiji T."/>
            <person name="Kobatake N."/>
            <person name="Inagaki H."/>
            <person name="Ikema Y."/>
            <person name="Okamoto S."/>
            <person name="Okitani R."/>
            <person name="Kawakami T."/>
            <person name="Noguchi S."/>
            <person name="Itoh T."/>
            <person name="Shigeta K."/>
            <person name="Senba T."/>
            <person name="Matsumura K."/>
            <person name="Nakajima Y."/>
            <person name="Mizuno T."/>
            <person name="Morinaga M."/>
            <person name="Sasaki M."/>
            <person name="Togashi T."/>
            <person name="Oyama M."/>
            <person name="Hata H."/>
            <person name="Watanabe M."/>
            <person name="Komatsu T."/>
            <person name="Mizushima-Sugano J."/>
            <person name="Satoh T."/>
            <person name="Shirai Y."/>
            <person name="Takahashi Y."/>
            <person name="Nakagawa K."/>
            <person name="Okumura K."/>
            <person name="Nagase T."/>
            <person name="Nomura N."/>
            <person name="Kikuchi H."/>
            <person name="Masuho Y."/>
            <person name="Yamashita R."/>
            <person name="Nakai K."/>
            <person name="Yada T."/>
            <person name="Nakamura Y."/>
            <person name="Ohara O."/>
            <person name="Isogai T."/>
            <person name="Sugano S."/>
        </authorList>
    </citation>
    <scope>NUCLEOTIDE SEQUENCE [LARGE SCALE MRNA] (ISOFORMS 1 AND 2)</scope>
    <source>
        <tissue>Uterus</tissue>
    </source>
</reference>
<reference key="3">
    <citation type="journal article" date="2006" name="Nature">
        <title>The finished DNA sequence of human chromosome 12.</title>
        <authorList>
            <person name="Scherer S.E."/>
            <person name="Muzny D.M."/>
            <person name="Buhay C.J."/>
            <person name="Chen R."/>
            <person name="Cree A."/>
            <person name="Ding Y."/>
            <person name="Dugan-Rocha S."/>
            <person name="Gill R."/>
            <person name="Gunaratne P."/>
            <person name="Harris R.A."/>
            <person name="Hawes A.C."/>
            <person name="Hernandez J."/>
            <person name="Hodgson A.V."/>
            <person name="Hume J."/>
            <person name="Jackson A."/>
            <person name="Khan Z.M."/>
            <person name="Kovar-Smith C."/>
            <person name="Lewis L.R."/>
            <person name="Lozado R.J."/>
            <person name="Metzker M.L."/>
            <person name="Milosavljevic A."/>
            <person name="Miner G.R."/>
            <person name="Montgomery K.T."/>
            <person name="Morgan M.B."/>
            <person name="Nazareth L.V."/>
            <person name="Scott G."/>
            <person name="Sodergren E."/>
            <person name="Song X.-Z."/>
            <person name="Steffen D."/>
            <person name="Lovering R.C."/>
            <person name="Wheeler D.A."/>
            <person name="Worley K.C."/>
            <person name="Yuan Y."/>
            <person name="Zhang Z."/>
            <person name="Adams C.Q."/>
            <person name="Ansari-Lari M.A."/>
            <person name="Ayele M."/>
            <person name="Brown M.J."/>
            <person name="Chen G."/>
            <person name="Chen Z."/>
            <person name="Clerc-Blankenburg K.P."/>
            <person name="Davis C."/>
            <person name="Delgado O."/>
            <person name="Dinh H.H."/>
            <person name="Draper H."/>
            <person name="Gonzalez-Garay M.L."/>
            <person name="Havlak P."/>
            <person name="Jackson L.R."/>
            <person name="Jacob L.S."/>
            <person name="Kelly S.H."/>
            <person name="Li L."/>
            <person name="Li Z."/>
            <person name="Liu J."/>
            <person name="Liu W."/>
            <person name="Lu J."/>
            <person name="Maheshwari M."/>
            <person name="Nguyen B.-V."/>
            <person name="Okwuonu G.O."/>
            <person name="Pasternak S."/>
            <person name="Perez L.M."/>
            <person name="Plopper F.J.H."/>
            <person name="Santibanez J."/>
            <person name="Shen H."/>
            <person name="Tabor P.E."/>
            <person name="Verduzco D."/>
            <person name="Waldron L."/>
            <person name="Wang Q."/>
            <person name="Williams G.A."/>
            <person name="Zhang J."/>
            <person name="Zhou J."/>
            <person name="Allen C.C."/>
            <person name="Amin A.G."/>
            <person name="Anyalebechi V."/>
            <person name="Bailey M."/>
            <person name="Barbaria J.A."/>
            <person name="Bimage K.E."/>
            <person name="Bryant N.P."/>
            <person name="Burch P.E."/>
            <person name="Burkett C.E."/>
            <person name="Burrell K.L."/>
            <person name="Calderon E."/>
            <person name="Cardenas V."/>
            <person name="Carter K."/>
            <person name="Casias K."/>
            <person name="Cavazos I."/>
            <person name="Cavazos S.R."/>
            <person name="Ceasar H."/>
            <person name="Chacko J."/>
            <person name="Chan S.N."/>
            <person name="Chavez D."/>
            <person name="Christopoulos C."/>
            <person name="Chu J."/>
            <person name="Cockrell R."/>
            <person name="Cox C.D."/>
            <person name="Dang M."/>
            <person name="Dathorne S.R."/>
            <person name="David R."/>
            <person name="Davis C.M."/>
            <person name="Davy-Carroll L."/>
            <person name="Deshazo D.R."/>
            <person name="Donlin J.E."/>
            <person name="D'Souza L."/>
            <person name="Eaves K.A."/>
            <person name="Egan A."/>
            <person name="Emery-Cohen A.J."/>
            <person name="Escotto M."/>
            <person name="Flagg N."/>
            <person name="Forbes L.D."/>
            <person name="Gabisi A.M."/>
            <person name="Garza M."/>
            <person name="Hamilton C."/>
            <person name="Henderson N."/>
            <person name="Hernandez O."/>
            <person name="Hines S."/>
            <person name="Hogues M.E."/>
            <person name="Huang M."/>
            <person name="Idlebird D.G."/>
            <person name="Johnson R."/>
            <person name="Jolivet A."/>
            <person name="Jones S."/>
            <person name="Kagan R."/>
            <person name="King L.M."/>
            <person name="Leal B."/>
            <person name="Lebow H."/>
            <person name="Lee S."/>
            <person name="LeVan J.M."/>
            <person name="Lewis L.C."/>
            <person name="London P."/>
            <person name="Lorensuhewa L.M."/>
            <person name="Loulseged H."/>
            <person name="Lovett D.A."/>
            <person name="Lucier A."/>
            <person name="Lucier R.L."/>
            <person name="Ma J."/>
            <person name="Madu R.C."/>
            <person name="Mapua P."/>
            <person name="Martindale A.D."/>
            <person name="Martinez E."/>
            <person name="Massey E."/>
            <person name="Mawhiney S."/>
            <person name="Meador M.G."/>
            <person name="Mendez S."/>
            <person name="Mercado C."/>
            <person name="Mercado I.C."/>
            <person name="Merritt C.E."/>
            <person name="Miner Z.L."/>
            <person name="Minja E."/>
            <person name="Mitchell T."/>
            <person name="Mohabbat F."/>
            <person name="Mohabbat K."/>
            <person name="Montgomery B."/>
            <person name="Moore N."/>
            <person name="Morris S."/>
            <person name="Munidasa M."/>
            <person name="Ngo R.N."/>
            <person name="Nguyen N.B."/>
            <person name="Nickerson E."/>
            <person name="Nwaokelemeh O.O."/>
            <person name="Nwokenkwo S."/>
            <person name="Obregon M."/>
            <person name="Oguh M."/>
            <person name="Oragunye N."/>
            <person name="Oviedo R.J."/>
            <person name="Parish B.J."/>
            <person name="Parker D.N."/>
            <person name="Parrish J."/>
            <person name="Parks K.L."/>
            <person name="Paul H.A."/>
            <person name="Payton B.A."/>
            <person name="Perez A."/>
            <person name="Perrin W."/>
            <person name="Pickens A."/>
            <person name="Primus E.L."/>
            <person name="Pu L.-L."/>
            <person name="Puazo M."/>
            <person name="Quiles M.M."/>
            <person name="Quiroz J.B."/>
            <person name="Rabata D."/>
            <person name="Reeves K."/>
            <person name="Ruiz S.J."/>
            <person name="Shao H."/>
            <person name="Sisson I."/>
            <person name="Sonaike T."/>
            <person name="Sorelle R.P."/>
            <person name="Sutton A.E."/>
            <person name="Svatek A.F."/>
            <person name="Svetz L.A."/>
            <person name="Tamerisa K.S."/>
            <person name="Taylor T.R."/>
            <person name="Teague B."/>
            <person name="Thomas N."/>
            <person name="Thorn R.D."/>
            <person name="Trejos Z.Y."/>
            <person name="Trevino B.K."/>
            <person name="Ukegbu O.N."/>
            <person name="Urban J.B."/>
            <person name="Vasquez L.I."/>
            <person name="Vera V.A."/>
            <person name="Villasana D.M."/>
            <person name="Wang L."/>
            <person name="Ward-Moore S."/>
            <person name="Warren J.T."/>
            <person name="Wei X."/>
            <person name="White F."/>
            <person name="Williamson A.L."/>
            <person name="Wleczyk R."/>
            <person name="Wooden H.S."/>
            <person name="Wooden S.H."/>
            <person name="Yen J."/>
            <person name="Yoon L."/>
            <person name="Yoon V."/>
            <person name="Zorrilla S.E."/>
            <person name="Nelson D."/>
            <person name="Kucherlapati R."/>
            <person name="Weinstock G."/>
            <person name="Gibbs R.A."/>
        </authorList>
    </citation>
    <scope>NUCLEOTIDE SEQUENCE [LARGE SCALE GENOMIC DNA]</scope>
</reference>
<reference key="4">
    <citation type="journal article" date="2004" name="Genome Res.">
        <title>The status, quality, and expansion of the NIH full-length cDNA project: the Mammalian Gene Collection (MGC).</title>
        <authorList>
            <consortium name="The MGC Project Team"/>
        </authorList>
    </citation>
    <scope>NUCLEOTIDE SEQUENCE [LARGE SCALE MRNA] (ISOFORM 1)</scope>
    <source>
        <tissue>Pancreas</tissue>
    </source>
</reference>
<reference key="5">
    <citation type="journal article" date="2010" name="Int. J. Oncol.">
        <title>Involvement of C12orf32 overexpression in breast carcinogenesis.</title>
        <authorList>
            <person name="Kim J.W."/>
            <person name="Fukukawa C."/>
            <person name="Ueda K."/>
            <person name="Nishidate T."/>
            <person name="Katagiri T."/>
            <person name="Nakamura Y."/>
        </authorList>
    </citation>
    <scope>INDUCTION</scope>
    <scope>SUBCELLULAR LOCATION</scope>
    <scope>TISSUE SPECIFICITY</scope>
    <scope>IDENTIFICATION BY MASS SPECTROMETRY</scope>
</reference>
<reference key="6">
    <citation type="journal article" date="2011" name="Science">
        <title>A DNA damage response screen identifies RHINO, a 9-1-1 and TopBP1 interacting protein required for ATR signaling.</title>
        <authorList>
            <person name="Cotta-Ramusino C."/>
            <person name="McDonald E.R. III"/>
            <person name="Hurov K."/>
            <person name="Sowa M.E."/>
            <person name="Harper J.W."/>
            <person name="Elledge S.J."/>
        </authorList>
    </citation>
    <scope>FUNCTION</scope>
    <scope>INTERACTION WITH RAD18; TOPBP1 AND UBE2N</scope>
    <scope>SUBCELLULAR LOCATION</scope>
    <scope>MUTAGENESIS OF 55-SER--PHE-61</scope>
    <scope>IDENTIFICATION BY MASS SPECTROMETRY</scope>
</reference>
<reference key="7">
    <citation type="journal article" date="2015" name="Cell Cycle">
        <title>RHINO forms a stoichiometric complex with the 9-1-1 checkpoint clamp and mediates ATR-Chk1 signaling.</title>
        <authorList>
            <person name="Lindsey-Boltz L.A."/>
            <person name="Kemp M.G."/>
            <person name="Capp C."/>
            <person name="Sancar A."/>
        </authorList>
    </citation>
    <scope>FUNCTION</scope>
    <scope>SUBCELLULAR LOCATION</scope>
    <scope>INTERACTION WITH TOPBP1</scope>
</reference>
<reference key="8">
    <citation type="journal article" date="2023" name="Science">
        <title>RHINO directs MMEJ to repair DNA breaks in mitosis.</title>
        <authorList>
            <person name="Brambati A."/>
            <person name="Sacco O."/>
            <person name="Porcella S."/>
            <person name="Heyza J."/>
            <person name="Kareh M."/>
            <person name="Schmidt J.C."/>
            <person name="Sfeir A."/>
        </authorList>
    </citation>
    <scope>FUNCTION</scope>
    <scope>SUBCELLULAR LOCATION</scope>
    <scope>INTERACTION WITH POLQ</scope>
    <scope>DEVELOPMENTAL STAGE</scope>
    <scope>PHOSPHORYLATION AT SER-51</scope>
    <scope>MUTAGENESIS OF 51-SER-THR-52; SER-51; 125-ARG--LEU-132; SER-141; 162-SER--SER-164; 174-GLN--SER-178 AND SER-178</scope>
</reference>
<reference evidence="13" key="9">
    <citation type="journal article" date="2020" name="J. Biol. Chem.">
        <title>Structure of the RAD9-RAD1-HUS1 checkpoint clamp bound to RHINO sheds light on the other side of the DNA clamp.</title>
        <authorList>
            <person name="Hara K."/>
            <person name="Iida N."/>
            <person name="Tamafune R."/>
            <person name="Ohashi E."/>
            <person name="Sakurai H."/>
            <person name="Ishikawa Y."/>
            <person name="Hishiki A."/>
            <person name="Hashimoto H."/>
        </authorList>
    </citation>
    <scope>X-RAY CRYSTALLOGRAPHY (2.40 ANGSTROMS) OF 45-64 IN COMPLEX WITH THE 9-1-1 COMPLEX</scope>
    <scope>INTERACTION WITH RAD1</scope>
    <scope>DOMAIN</scope>
</reference>
<organism>
    <name type="scientific">Homo sapiens</name>
    <name type="common">Human</name>
    <dbReference type="NCBI Taxonomy" id="9606"/>
    <lineage>
        <taxon>Eukaryota</taxon>
        <taxon>Metazoa</taxon>
        <taxon>Chordata</taxon>
        <taxon>Craniata</taxon>
        <taxon>Vertebrata</taxon>
        <taxon>Euteleostomi</taxon>
        <taxon>Mammalia</taxon>
        <taxon>Eutheria</taxon>
        <taxon>Euarchontoglires</taxon>
        <taxon>Primates</taxon>
        <taxon>Haplorrhini</taxon>
        <taxon>Catarrhini</taxon>
        <taxon>Hominidae</taxon>
        <taxon>Homo</taxon>
    </lineage>
</organism>
<evidence type="ECO:0000256" key="1">
    <source>
        <dbReference type="SAM" id="MobiDB-lite"/>
    </source>
</evidence>
<evidence type="ECO:0000269" key="2">
    <source>
    </source>
</evidence>
<evidence type="ECO:0000269" key="3">
    <source>
    </source>
</evidence>
<evidence type="ECO:0000269" key="4">
    <source>
    </source>
</evidence>
<evidence type="ECO:0000269" key="5">
    <source>
    </source>
</evidence>
<evidence type="ECO:0000269" key="6">
    <source>
    </source>
</evidence>
<evidence type="ECO:0000303" key="7">
    <source>
    </source>
</evidence>
<evidence type="ECO:0000303" key="8">
    <source>
    </source>
</evidence>
<evidence type="ECO:0000303" key="9">
    <source>
    </source>
</evidence>
<evidence type="ECO:0000303" key="10">
    <source>
    </source>
</evidence>
<evidence type="ECO:0000305" key="11"/>
<evidence type="ECO:0000312" key="12">
    <source>
        <dbReference type="HGNC" id="HGNC:28206"/>
    </source>
</evidence>
<evidence type="ECO:0007744" key="13">
    <source>
        <dbReference type="PDB" id="6J8Y"/>
    </source>
</evidence>
<accession>Q9BSD3</accession>
<accession>B7Z989</accession>
<sequence length="238" mass="26709">MPPRKKRRQPSQKAPLLFHQQPLEGPKHSCASTQLPITHTRQVPSKPIDHSTITSWVSPDFDTAAGSLFPAYQKHQNRARHSSRKPTTSKFPHLTFESPQSSSSETLGIPLIRECPSESEKDVSRRPLVPVLSPQSCGNMSVQALQSLPYVFIPPDIQTPESSSVKEELIPQDQKENSLLSCTLHTGTPNSPEPGPVLVKDTPEDKYGIKVTWRRRQHLLAYLRERGKLSRSQFLVKS</sequence>